<comment type="function">
    <text evidence="1">Major role in the synthesis of nucleoside triphosphates other than ATP. The ATP gamma phosphate is transferred to the NDP beta phosphate via a ping-pong mechanism, using a phosphorylated active-site intermediate.</text>
</comment>
<comment type="catalytic activity">
    <reaction evidence="1">
        <text>a 2'-deoxyribonucleoside 5'-diphosphate + ATP = a 2'-deoxyribonucleoside 5'-triphosphate + ADP</text>
        <dbReference type="Rhea" id="RHEA:44640"/>
        <dbReference type="ChEBI" id="CHEBI:30616"/>
        <dbReference type="ChEBI" id="CHEBI:61560"/>
        <dbReference type="ChEBI" id="CHEBI:73316"/>
        <dbReference type="ChEBI" id="CHEBI:456216"/>
        <dbReference type="EC" id="2.7.4.6"/>
    </reaction>
</comment>
<comment type="catalytic activity">
    <reaction evidence="1">
        <text>a ribonucleoside 5'-diphosphate + ATP = a ribonucleoside 5'-triphosphate + ADP</text>
        <dbReference type="Rhea" id="RHEA:18113"/>
        <dbReference type="ChEBI" id="CHEBI:30616"/>
        <dbReference type="ChEBI" id="CHEBI:57930"/>
        <dbReference type="ChEBI" id="CHEBI:61557"/>
        <dbReference type="ChEBI" id="CHEBI:456216"/>
        <dbReference type="EC" id="2.7.4.6"/>
    </reaction>
</comment>
<comment type="cofactor">
    <cofactor evidence="1">
        <name>Mg(2+)</name>
        <dbReference type="ChEBI" id="CHEBI:18420"/>
    </cofactor>
</comment>
<comment type="subunit">
    <text evidence="1">Homotetramer.</text>
</comment>
<comment type="subcellular location">
    <subcellularLocation>
        <location evidence="1">Cytoplasm</location>
    </subcellularLocation>
</comment>
<comment type="similarity">
    <text evidence="1">Belongs to the NDK family.</text>
</comment>
<organism>
    <name type="scientific">Helicobacter pylori (strain HPAG1)</name>
    <dbReference type="NCBI Taxonomy" id="357544"/>
    <lineage>
        <taxon>Bacteria</taxon>
        <taxon>Pseudomonadati</taxon>
        <taxon>Campylobacterota</taxon>
        <taxon>Epsilonproteobacteria</taxon>
        <taxon>Campylobacterales</taxon>
        <taxon>Helicobacteraceae</taxon>
        <taxon>Helicobacter</taxon>
    </lineage>
</organism>
<name>NDK_HELPH</name>
<evidence type="ECO:0000255" key="1">
    <source>
        <dbReference type="HAMAP-Rule" id="MF_00451"/>
    </source>
</evidence>
<feature type="chain" id="PRO_0000267783" description="Nucleoside diphosphate kinase">
    <location>
        <begin position="1"/>
        <end position="137"/>
    </location>
</feature>
<feature type="active site" description="Pros-phosphohistidine intermediate" evidence="1">
    <location>
        <position position="116"/>
    </location>
</feature>
<feature type="binding site" evidence="1">
    <location>
        <position position="10"/>
    </location>
    <ligand>
        <name>ATP</name>
        <dbReference type="ChEBI" id="CHEBI:30616"/>
    </ligand>
</feature>
<feature type="binding site" evidence="1">
    <location>
        <position position="58"/>
    </location>
    <ligand>
        <name>ATP</name>
        <dbReference type="ChEBI" id="CHEBI:30616"/>
    </ligand>
</feature>
<feature type="binding site" evidence="1">
    <location>
        <position position="86"/>
    </location>
    <ligand>
        <name>ATP</name>
        <dbReference type="ChEBI" id="CHEBI:30616"/>
    </ligand>
</feature>
<feature type="binding site" evidence="1">
    <location>
        <position position="92"/>
    </location>
    <ligand>
        <name>ATP</name>
        <dbReference type="ChEBI" id="CHEBI:30616"/>
    </ligand>
</feature>
<feature type="binding site" evidence="1">
    <location>
        <position position="103"/>
    </location>
    <ligand>
        <name>ATP</name>
        <dbReference type="ChEBI" id="CHEBI:30616"/>
    </ligand>
</feature>
<feature type="binding site" evidence="1">
    <location>
        <position position="113"/>
    </location>
    <ligand>
        <name>ATP</name>
        <dbReference type="ChEBI" id="CHEBI:30616"/>
    </ligand>
</feature>
<protein>
    <recommendedName>
        <fullName evidence="1">Nucleoside diphosphate kinase</fullName>
        <shortName evidence="1">NDK</shortName>
        <shortName evidence="1">NDP kinase</shortName>
        <ecNumber evidence="1">2.7.4.6</ecNumber>
    </recommendedName>
    <alternativeName>
        <fullName evidence="1">Nucleoside-2-P kinase</fullName>
    </alternativeName>
</protein>
<dbReference type="EC" id="2.7.4.6" evidence="1"/>
<dbReference type="EMBL" id="CP000241">
    <property type="protein sequence ID" value="ABF84259.1"/>
    <property type="molecule type" value="Genomic_DNA"/>
</dbReference>
<dbReference type="RefSeq" id="WP_000813730.1">
    <property type="nucleotide sequence ID" value="NC_008086.1"/>
</dbReference>
<dbReference type="SMR" id="Q1CUW3"/>
<dbReference type="GeneID" id="93236564"/>
<dbReference type="KEGG" id="hpa:HPAG1_0192"/>
<dbReference type="HOGENOM" id="CLU_060216_8_1_7"/>
<dbReference type="GO" id="GO:0005737">
    <property type="term" value="C:cytoplasm"/>
    <property type="evidence" value="ECO:0007669"/>
    <property type="project" value="UniProtKB-SubCell"/>
</dbReference>
<dbReference type="GO" id="GO:0005524">
    <property type="term" value="F:ATP binding"/>
    <property type="evidence" value="ECO:0007669"/>
    <property type="project" value="UniProtKB-UniRule"/>
</dbReference>
<dbReference type="GO" id="GO:0046872">
    <property type="term" value="F:metal ion binding"/>
    <property type="evidence" value="ECO:0007669"/>
    <property type="project" value="UniProtKB-KW"/>
</dbReference>
<dbReference type="GO" id="GO:0004550">
    <property type="term" value="F:nucleoside diphosphate kinase activity"/>
    <property type="evidence" value="ECO:0007669"/>
    <property type="project" value="UniProtKB-UniRule"/>
</dbReference>
<dbReference type="GO" id="GO:0006241">
    <property type="term" value="P:CTP biosynthetic process"/>
    <property type="evidence" value="ECO:0007669"/>
    <property type="project" value="UniProtKB-UniRule"/>
</dbReference>
<dbReference type="GO" id="GO:0006183">
    <property type="term" value="P:GTP biosynthetic process"/>
    <property type="evidence" value="ECO:0007669"/>
    <property type="project" value="UniProtKB-UniRule"/>
</dbReference>
<dbReference type="GO" id="GO:0006228">
    <property type="term" value="P:UTP biosynthetic process"/>
    <property type="evidence" value="ECO:0007669"/>
    <property type="project" value="UniProtKB-UniRule"/>
</dbReference>
<dbReference type="CDD" id="cd04413">
    <property type="entry name" value="NDPk_I"/>
    <property type="match status" value="1"/>
</dbReference>
<dbReference type="FunFam" id="3.30.70.141:FF:000001">
    <property type="entry name" value="Nucleoside diphosphate kinase"/>
    <property type="match status" value="1"/>
</dbReference>
<dbReference type="Gene3D" id="3.30.70.141">
    <property type="entry name" value="Nucleoside diphosphate kinase-like domain"/>
    <property type="match status" value="1"/>
</dbReference>
<dbReference type="HAMAP" id="MF_00451">
    <property type="entry name" value="NDP_kinase"/>
    <property type="match status" value="1"/>
</dbReference>
<dbReference type="InterPro" id="IPR034907">
    <property type="entry name" value="NDK-like_dom"/>
</dbReference>
<dbReference type="InterPro" id="IPR036850">
    <property type="entry name" value="NDK-like_dom_sf"/>
</dbReference>
<dbReference type="InterPro" id="IPR001564">
    <property type="entry name" value="Nucleoside_diP_kinase"/>
</dbReference>
<dbReference type="InterPro" id="IPR023005">
    <property type="entry name" value="Nucleoside_diP_kinase_AS"/>
</dbReference>
<dbReference type="NCBIfam" id="NF001908">
    <property type="entry name" value="PRK00668.1"/>
    <property type="match status" value="1"/>
</dbReference>
<dbReference type="PANTHER" id="PTHR46161">
    <property type="entry name" value="NUCLEOSIDE DIPHOSPHATE KINASE"/>
    <property type="match status" value="1"/>
</dbReference>
<dbReference type="PANTHER" id="PTHR46161:SF3">
    <property type="entry name" value="NUCLEOSIDE DIPHOSPHATE KINASE DDB_G0292928-RELATED"/>
    <property type="match status" value="1"/>
</dbReference>
<dbReference type="Pfam" id="PF00334">
    <property type="entry name" value="NDK"/>
    <property type="match status" value="1"/>
</dbReference>
<dbReference type="PRINTS" id="PR01243">
    <property type="entry name" value="NUCDPKINASE"/>
</dbReference>
<dbReference type="SMART" id="SM00562">
    <property type="entry name" value="NDK"/>
    <property type="match status" value="1"/>
</dbReference>
<dbReference type="SUPFAM" id="SSF54919">
    <property type="entry name" value="Nucleoside diphosphate kinase, NDK"/>
    <property type="match status" value="1"/>
</dbReference>
<dbReference type="PROSITE" id="PS00469">
    <property type="entry name" value="NDPK"/>
    <property type="match status" value="1"/>
</dbReference>
<dbReference type="PROSITE" id="PS51374">
    <property type="entry name" value="NDPK_LIKE"/>
    <property type="match status" value="1"/>
</dbReference>
<accession>Q1CUW3</accession>
<proteinExistence type="inferred from homology"/>
<sequence>MKQRTLSIIKPDALKKKVVGKIIDRFESNGLEVIAMKRLHLSVKDAENFYAIHRERPFFKDLIEFMVSGPVVVMVLEGKDAVAKNRDLMGATDPKLAQKGTIRADFAESIDANAVHGSDSLENAHNEIAFFFAARDL</sequence>
<gene>
    <name evidence="1" type="primary">ndk</name>
    <name type="ordered locus">HPAG1_0192</name>
</gene>
<reference key="1">
    <citation type="journal article" date="2006" name="Proc. Natl. Acad. Sci. U.S.A.">
        <title>The complete genome sequence of a chronic atrophic gastritis Helicobacter pylori strain: evolution during disease progression.</title>
        <authorList>
            <person name="Oh J.D."/>
            <person name="Kling-Baeckhed H."/>
            <person name="Giannakis M."/>
            <person name="Xu J."/>
            <person name="Fulton R.S."/>
            <person name="Fulton L.A."/>
            <person name="Cordum H.S."/>
            <person name="Wang C."/>
            <person name="Elliott G."/>
            <person name="Edwards J."/>
            <person name="Mardis E.R."/>
            <person name="Engstrand L.G."/>
            <person name="Gordon J.I."/>
        </authorList>
    </citation>
    <scope>NUCLEOTIDE SEQUENCE [LARGE SCALE GENOMIC DNA]</scope>
    <source>
        <strain>HPAG1</strain>
    </source>
</reference>
<keyword id="KW-0067">ATP-binding</keyword>
<keyword id="KW-0963">Cytoplasm</keyword>
<keyword id="KW-0418">Kinase</keyword>
<keyword id="KW-0460">Magnesium</keyword>
<keyword id="KW-0479">Metal-binding</keyword>
<keyword id="KW-0546">Nucleotide metabolism</keyword>
<keyword id="KW-0547">Nucleotide-binding</keyword>
<keyword id="KW-0597">Phosphoprotein</keyword>
<keyword id="KW-0808">Transferase</keyword>